<organism>
    <name type="scientific">Pseudomonas syringae pv. tomato (strain ATCC BAA-871 / DC3000)</name>
    <dbReference type="NCBI Taxonomy" id="223283"/>
    <lineage>
        <taxon>Bacteria</taxon>
        <taxon>Pseudomonadati</taxon>
        <taxon>Pseudomonadota</taxon>
        <taxon>Gammaproteobacteria</taxon>
        <taxon>Pseudomonadales</taxon>
        <taxon>Pseudomonadaceae</taxon>
        <taxon>Pseudomonas</taxon>
    </lineage>
</organism>
<dbReference type="EC" id="2.7.7.7" evidence="1"/>
<dbReference type="EMBL" id="AE016853">
    <property type="protein sequence ID" value="AAO56295.1"/>
    <property type="molecule type" value="Genomic_DNA"/>
</dbReference>
<dbReference type="RefSeq" id="NP_792600.1">
    <property type="nucleotide sequence ID" value="NC_004578.1"/>
</dbReference>
<dbReference type="RefSeq" id="WP_011104197.1">
    <property type="nucleotide sequence ID" value="NC_004578.1"/>
</dbReference>
<dbReference type="SMR" id="Q881T7"/>
<dbReference type="STRING" id="223283.PSPTO_2795"/>
<dbReference type="GeneID" id="1184449"/>
<dbReference type="KEGG" id="pst:PSPTO_2795"/>
<dbReference type="PATRIC" id="fig|223283.9.peg.2853"/>
<dbReference type="eggNOG" id="COG0587">
    <property type="taxonomic scope" value="Bacteria"/>
</dbReference>
<dbReference type="HOGENOM" id="CLU_001600_4_0_6"/>
<dbReference type="OrthoDB" id="9803237at2"/>
<dbReference type="PhylomeDB" id="Q881T7"/>
<dbReference type="Proteomes" id="UP000002515">
    <property type="component" value="Chromosome"/>
</dbReference>
<dbReference type="GO" id="GO:0005737">
    <property type="term" value="C:cytoplasm"/>
    <property type="evidence" value="ECO:0007669"/>
    <property type="project" value="UniProtKB-SubCell"/>
</dbReference>
<dbReference type="GO" id="GO:0008408">
    <property type="term" value="F:3'-5' exonuclease activity"/>
    <property type="evidence" value="ECO:0007669"/>
    <property type="project" value="InterPro"/>
</dbReference>
<dbReference type="GO" id="GO:0003887">
    <property type="term" value="F:DNA-directed DNA polymerase activity"/>
    <property type="evidence" value="ECO:0007669"/>
    <property type="project" value="UniProtKB-UniRule"/>
</dbReference>
<dbReference type="GO" id="GO:0003676">
    <property type="term" value="F:nucleic acid binding"/>
    <property type="evidence" value="ECO:0007669"/>
    <property type="project" value="InterPro"/>
</dbReference>
<dbReference type="GO" id="GO:0006281">
    <property type="term" value="P:DNA repair"/>
    <property type="evidence" value="ECO:0007669"/>
    <property type="project" value="UniProtKB-UniRule"/>
</dbReference>
<dbReference type="GO" id="GO:0006260">
    <property type="term" value="P:DNA replication"/>
    <property type="evidence" value="ECO:0007669"/>
    <property type="project" value="UniProtKB-KW"/>
</dbReference>
<dbReference type="CDD" id="cd04485">
    <property type="entry name" value="DnaE_OBF"/>
    <property type="match status" value="1"/>
</dbReference>
<dbReference type="CDD" id="cd07434">
    <property type="entry name" value="PHP_PolIIIA_DnaE2"/>
    <property type="match status" value="1"/>
</dbReference>
<dbReference type="FunFam" id="1.10.150.870:FF:000002">
    <property type="entry name" value="Error-prone DNA polymerase"/>
    <property type="match status" value="1"/>
</dbReference>
<dbReference type="Gene3D" id="1.10.150.870">
    <property type="match status" value="1"/>
</dbReference>
<dbReference type="Gene3D" id="3.20.20.140">
    <property type="entry name" value="Metal-dependent hydrolases"/>
    <property type="match status" value="1"/>
</dbReference>
<dbReference type="HAMAP" id="MF_01902">
    <property type="entry name" value="DNApol_error_prone"/>
    <property type="match status" value="1"/>
</dbReference>
<dbReference type="InterPro" id="IPR011708">
    <property type="entry name" value="DNA_pol3_alpha_NTPase_dom"/>
</dbReference>
<dbReference type="InterPro" id="IPR040982">
    <property type="entry name" value="DNA_pol3_finger"/>
</dbReference>
<dbReference type="InterPro" id="IPR023073">
    <property type="entry name" value="DnaE2"/>
</dbReference>
<dbReference type="InterPro" id="IPR004805">
    <property type="entry name" value="DnaE2/DnaE/PolC"/>
</dbReference>
<dbReference type="InterPro" id="IPR029460">
    <property type="entry name" value="DNAPol_HHH"/>
</dbReference>
<dbReference type="InterPro" id="IPR004365">
    <property type="entry name" value="NA-bd_OB_tRNA"/>
</dbReference>
<dbReference type="InterPro" id="IPR004013">
    <property type="entry name" value="PHP_dom"/>
</dbReference>
<dbReference type="InterPro" id="IPR003141">
    <property type="entry name" value="Pol/His_phosphatase_N"/>
</dbReference>
<dbReference type="InterPro" id="IPR016195">
    <property type="entry name" value="Pol/histidinol_Pase-like"/>
</dbReference>
<dbReference type="NCBIfam" id="TIGR00594">
    <property type="entry name" value="polc"/>
    <property type="match status" value="1"/>
</dbReference>
<dbReference type="NCBIfam" id="NF004225">
    <property type="entry name" value="PRK05672.1"/>
    <property type="match status" value="1"/>
</dbReference>
<dbReference type="PANTHER" id="PTHR32294">
    <property type="entry name" value="DNA POLYMERASE III SUBUNIT ALPHA"/>
    <property type="match status" value="1"/>
</dbReference>
<dbReference type="PANTHER" id="PTHR32294:SF4">
    <property type="entry name" value="ERROR-PRONE DNA POLYMERASE"/>
    <property type="match status" value="1"/>
</dbReference>
<dbReference type="Pfam" id="PF07733">
    <property type="entry name" value="DNA_pol3_alpha"/>
    <property type="match status" value="1"/>
</dbReference>
<dbReference type="Pfam" id="PF17657">
    <property type="entry name" value="DNA_pol3_finger"/>
    <property type="match status" value="1"/>
</dbReference>
<dbReference type="Pfam" id="PF14579">
    <property type="entry name" value="HHH_6"/>
    <property type="match status" value="1"/>
</dbReference>
<dbReference type="Pfam" id="PF02811">
    <property type="entry name" value="PHP"/>
    <property type="match status" value="1"/>
</dbReference>
<dbReference type="Pfam" id="PF01336">
    <property type="entry name" value="tRNA_anti-codon"/>
    <property type="match status" value="1"/>
</dbReference>
<dbReference type="SMART" id="SM00481">
    <property type="entry name" value="POLIIIAc"/>
    <property type="match status" value="1"/>
</dbReference>
<dbReference type="SUPFAM" id="SSF89550">
    <property type="entry name" value="PHP domain-like"/>
    <property type="match status" value="1"/>
</dbReference>
<protein>
    <recommendedName>
        <fullName evidence="1">Error-prone DNA polymerase</fullName>
        <ecNumber evidence="1">2.7.7.7</ecNumber>
    </recommendedName>
</protein>
<proteinExistence type="inferred from homology"/>
<comment type="function">
    <text evidence="1">DNA polymerase involved in damage-induced mutagenesis and translesion synthesis (TLS). It is not the major replicative DNA polymerase.</text>
</comment>
<comment type="catalytic activity">
    <reaction evidence="1">
        <text>DNA(n) + a 2'-deoxyribonucleoside 5'-triphosphate = DNA(n+1) + diphosphate</text>
        <dbReference type="Rhea" id="RHEA:22508"/>
        <dbReference type="Rhea" id="RHEA-COMP:17339"/>
        <dbReference type="Rhea" id="RHEA-COMP:17340"/>
        <dbReference type="ChEBI" id="CHEBI:33019"/>
        <dbReference type="ChEBI" id="CHEBI:61560"/>
        <dbReference type="ChEBI" id="CHEBI:173112"/>
        <dbReference type="EC" id="2.7.7.7"/>
    </reaction>
</comment>
<comment type="subcellular location">
    <subcellularLocation>
        <location evidence="1">Cytoplasm</location>
    </subcellularLocation>
</comment>
<comment type="similarity">
    <text evidence="1">Belongs to the DNA polymerase type-C family. DnaE2 subfamily.</text>
</comment>
<evidence type="ECO:0000255" key="1">
    <source>
        <dbReference type="HAMAP-Rule" id="MF_01902"/>
    </source>
</evidence>
<sequence length="1031" mass="115990">MNTEYAELHCLSNFSFQRGASSARELFDRALRHGYAALAITDECTLAGIVRAWQASKDTGLPLIVGSEMHLENGPKIVLLVENLTGYQALCTLITVARRRAKKGEYRLLLEDFDHLPGGLLAIWLADIEGDAQACLAQGNWLRERFAERLWLGVELHRGADDEQRLADLLALAQSLAIPAVASGDVHMHARGRRALQDTITAIRHHTTVAEAGHLLFANGERHLRSLDALAEHYPDWLLAESLRIARRCTFTFDQLQYEYPHELVPKGQTSTSWLRELTERGIRRRWPRGLSVAARAQVEKELALITEKKFDSYFLTVHDIVEFARSQHILCQGRGSAANSAVCYALGITELNPEKSNLLFERFISKERDEPPDIDVDFEHDRREEVIQYIFRRYGRGRAALTAVASTYHGSGALRDVAKVLGLPPDQINALADAFSRWSDSLPSPERLREYGFDAETPILKRVLALTGELIGFPRHLSQHPGGFVISEHPLDTLVPVENAAMAERTIIQWDKDDLDLVGLLKVDILALGMLSALRRTFDLVHLHRGKQWTLASLPGDDRPTYEMISRADTIGVFQIESRAQMAMLPRLRPEKFYDLVIEVAIVRPGPIQGDMVHPYLRRRNKEEAITYPPKLKSVFERTLGVPLFQEQVMEVAIIAADYTPGEADQLRRAMAAWKRHGGLDPHRERLRTGMLANGYDADFADRIFEQIKGFGSYGFPESHAASFALLTYASCWLKCHEPAAFTCALINSWPMGFYSPDQLLQDARRHHIEIRPVDVRYSHWDCTLEPLDHPDSTRNLAIRLGLRMLRSFREEDALRIEAARSKRPFADATDLAQRAGLDSRAAEALADSGALRGLIGHRHRARWEVAGVEAQRPLFDDVTSEEVQVTLPLPTVAEDLVADYATLGTTLGPHPLALLRRQLAAKRFRSSQDLLSLENNRTLSVAGLVIGRQRPGTASGVTFVTLEDEFGMVNVVVWRDLAERQRKVLVGSQLLQVFGRLESNNGVRHLIAQRLYDLTPLLTGLEVRSRDFQ</sequence>
<gene>
    <name evidence="1" type="primary">dnaE2</name>
    <name type="ordered locus">PSPTO_2795</name>
</gene>
<reference key="1">
    <citation type="journal article" date="2003" name="Proc. Natl. Acad. Sci. U.S.A.">
        <title>The complete genome sequence of the Arabidopsis and tomato pathogen Pseudomonas syringae pv. tomato DC3000.</title>
        <authorList>
            <person name="Buell C.R."/>
            <person name="Joardar V."/>
            <person name="Lindeberg M."/>
            <person name="Selengut J."/>
            <person name="Paulsen I.T."/>
            <person name="Gwinn M.L."/>
            <person name="Dodson R.J."/>
            <person name="DeBoy R.T."/>
            <person name="Durkin A.S."/>
            <person name="Kolonay J.F."/>
            <person name="Madupu R."/>
            <person name="Daugherty S.C."/>
            <person name="Brinkac L.M."/>
            <person name="Beanan M.J."/>
            <person name="Haft D.H."/>
            <person name="Nelson W.C."/>
            <person name="Davidsen T.M."/>
            <person name="Zafar N."/>
            <person name="Zhou L."/>
            <person name="Liu J."/>
            <person name="Yuan Q."/>
            <person name="Khouri H.M."/>
            <person name="Fedorova N.B."/>
            <person name="Tran B."/>
            <person name="Russell D."/>
            <person name="Berry K.J."/>
            <person name="Utterback T.R."/>
            <person name="Van Aken S.E."/>
            <person name="Feldblyum T.V."/>
            <person name="D'Ascenzo M."/>
            <person name="Deng W.-L."/>
            <person name="Ramos A.R."/>
            <person name="Alfano J.R."/>
            <person name="Cartinhour S."/>
            <person name="Chatterjee A.K."/>
            <person name="Delaney T.P."/>
            <person name="Lazarowitz S.G."/>
            <person name="Martin G.B."/>
            <person name="Schneider D.J."/>
            <person name="Tang X."/>
            <person name="Bender C.L."/>
            <person name="White O."/>
            <person name="Fraser C.M."/>
            <person name="Collmer A."/>
        </authorList>
    </citation>
    <scope>NUCLEOTIDE SEQUENCE [LARGE SCALE GENOMIC DNA]</scope>
    <source>
        <strain>ATCC BAA-871 / DC3000</strain>
    </source>
</reference>
<feature type="chain" id="PRO_0000103392" description="Error-prone DNA polymerase">
    <location>
        <begin position="1"/>
        <end position="1031"/>
    </location>
</feature>
<name>DNAE2_PSESM</name>
<accession>Q881T7</accession>
<keyword id="KW-0963">Cytoplasm</keyword>
<keyword id="KW-0227">DNA damage</keyword>
<keyword id="KW-0234">DNA repair</keyword>
<keyword id="KW-0235">DNA replication</keyword>
<keyword id="KW-0239">DNA-directed DNA polymerase</keyword>
<keyword id="KW-0548">Nucleotidyltransferase</keyword>
<keyword id="KW-1185">Reference proteome</keyword>
<keyword id="KW-0808">Transferase</keyword>